<proteinExistence type="inferred from homology"/>
<protein>
    <recommendedName>
        <fullName>Tubulin beta chain</fullName>
    </recommendedName>
    <alternativeName>
        <fullName>Beta-tubulin</fullName>
    </alternativeName>
</protein>
<keyword id="KW-0963">Cytoplasm</keyword>
<keyword id="KW-0206">Cytoskeleton</keyword>
<keyword id="KW-0342">GTP-binding</keyword>
<keyword id="KW-0460">Magnesium</keyword>
<keyword id="KW-0479">Metal-binding</keyword>
<keyword id="KW-0493">Microtubule</keyword>
<keyword id="KW-0547">Nucleotide-binding</keyword>
<sequence length="442" mass="49430">MREIVHIQGGQCGNQIGAKFWEVISDEHGIDPTGTYHGDSDLQLERINVYYNEATGGRYVPRAVLMDLEPGTMDSVRAGPFGQLFRPDNFVFGQSGAGNNWAKGHYTEGAELIDSVLDVVRKEAEGCDCLQGFQITHSLGGGTGSGMGTLLISKVREEYPDRIMATFSVVPSPKVSDTVVEPYNATLSVHQLVENADEVMCIDNEALYDICFRTLKLTTPTYGDLNHLVSAGISGVTCCLRFPGQLNSDLRKLAVNLIPFPRLHFFMTGFAPLTSRGSQQYRALTVPELTQQMFDAKNMMCASDPRHGRYLTASALFRGRMSTKEVDEQMLNVQNKNSSYFVEWIPNNIKSSVCDIPPKGLKMAVTFLGNSTAIQEMFKRVGEQFTAMFRRKAFLHWYTGEGMDEMEFTEAESNMNDLVSEYQQYQDATAEDEEEMDEEQME</sequence>
<gene>
    <name type="primary">TUBB1</name>
</gene>
<gene>
    <name type="primary">TUBB2</name>
</gene>
<reference key="1">
    <citation type="journal article" date="1987" name="J. Mol. Biol.">
        <title>Nucleotide sequence and expression of two beta-tubulin genes in Stylonychia lemnae.</title>
        <authorList>
            <person name="Conzelmann K.K."/>
            <person name="Helftenbein E."/>
        </authorList>
    </citation>
    <scope>NUCLEOTIDE SEQUENCE [GENOMIC DNA]</scope>
    <source>
        <strain>DO-EK 2</strain>
    </source>
</reference>
<dbReference type="EMBL" id="X06653">
    <property type="protein sequence ID" value="CAA29853.1"/>
    <property type="molecule type" value="Genomic_DNA"/>
</dbReference>
<dbReference type="EMBL" id="X06874">
    <property type="protein sequence ID" value="CAA29995.1"/>
    <property type="molecule type" value="Genomic_DNA"/>
</dbReference>
<dbReference type="PIR" id="S00683">
    <property type="entry name" value="S00683"/>
</dbReference>
<dbReference type="SMR" id="P11857"/>
<dbReference type="OMA" id="WVPRSVN"/>
<dbReference type="OrthoDB" id="411080at2759"/>
<dbReference type="GO" id="GO:0005737">
    <property type="term" value="C:cytoplasm"/>
    <property type="evidence" value="ECO:0007669"/>
    <property type="project" value="UniProtKB-KW"/>
</dbReference>
<dbReference type="GO" id="GO:0005874">
    <property type="term" value="C:microtubule"/>
    <property type="evidence" value="ECO:0007669"/>
    <property type="project" value="UniProtKB-KW"/>
</dbReference>
<dbReference type="GO" id="GO:0005525">
    <property type="term" value="F:GTP binding"/>
    <property type="evidence" value="ECO:0007669"/>
    <property type="project" value="UniProtKB-KW"/>
</dbReference>
<dbReference type="GO" id="GO:0003924">
    <property type="term" value="F:GTPase activity"/>
    <property type="evidence" value="ECO:0007669"/>
    <property type="project" value="InterPro"/>
</dbReference>
<dbReference type="GO" id="GO:0046872">
    <property type="term" value="F:metal ion binding"/>
    <property type="evidence" value="ECO:0007669"/>
    <property type="project" value="UniProtKB-KW"/>
</dbReference>
<dbReference type="GO" id="GO:0005200">
    <property type="term" value="F:structural constituent of cytoskeleton"/>
    <property type="evidence" value="ECO:0007669"/>
    <property type="project" value="InterPro"/>
</dbReference>
<dbReference type="GO" id="GO:0007017">
    <property type="term" value="P:microtubule-based process"/>
    <property type="evidence" value="ECO:0007669"/>
    <property type="project" value="InterPro"/>
</dbReference>
<dbReference type="CDD" id="cd02187">
    <property type="entry name" value="beta_tubulin"/>
    <property type="match status" value="1"/>
</dbReference>
<dbReference type="FunFam" id="1.10.287.600:FF:000002">
    <property type="entry name" value="Tubulin beta chain"/>
    <property type="match status" value="1"/>
</dbReference>
<dbReference type="FunFam" id="3.30.1330.20:FF:000002">
    <property type="entry name" value="Tubulin beta chain"/>
    <property type="match status" value="1"/>
</dbReference>
<dbReference type="FunFam" id="3.40.50.1440:FF:000003">
    <property type="entry name" value="Tubulin beta chain"/>
    <property type="match status" value="1"/>
</dbReference>
<dbReference type="Gene3D" id="1.10.287.600">
    <property type="entry name" value="Helix hairpin bin"/>
    <property type="match status" value="1"/>
</dbReference>
<dbReference type="Gene3D" id="3.30.1330.20">
    <property type="entry name" value="Tubulin/FtsZ, C-terminal domain"/>
    <property type="match status" value="1"/>
</dbReference>
<dbReference type="Gene3D" id="3.40.50.1440">
    <property type="entry name" value="Tubulin/FtsZ, GTPase domain"/>
    <property type="match status" value="1"/>
</dbReference>
<dbReference type="InterPro" id="IPR013838">
    <property type="entry name" value="Beta-tubulin_BS"/>
</dbReference>
<dbReference type="InterPro" id="IPR002453">
    <property type="entry name" value="Beta_tubulin"/>
</dbReference>
<dbReference type="InterPro" id="IPR008280">
    <property type="entry name" value="Tub_FtsZ_C"/>
</dbReference>
<dbReference type="InterPro" id="IPR000217">
    <property type="entry name" value="Tubulin"/>
</dbReference>
<dbReference type="InterPro" id="IPR037103">
    <property type="entry name" value="Tubulin/FtsZ-like_C"/>
</dbReference>
<dbReference type="InterPro" id="IPR018316">
    <property type="entry name" value="Tubulin/FtsZ_2-layer-sand-dom"/>
</dbReference>
<dbReference type="InterPro" id="IPR036525">
    <property type="entry name" value="Tubulin/FtsZ_GTPase_sf"/>
</dbReference>
<dbReference type="InterPro" id="IPR023123">
    <property type="entry name" value="Tubulin_C"/>
</dbReference>
<dbReference type="InterPro" id="IPR017975">
    <property type="entry name" value="Tubulin_CS"/>
</dbReference>
<dbReference type="InterPro" id="IPR003008">
    <property type="entry name" value="Tubulin_FtsZ_GTPase"/>
</dbReference>
<dbReference type="PANTHER" id="PTHR11588">
    <property type="entry name" value="TUBULIN"/>
    <property type="match status" value="1"/>
</dbReference>
<dbReference type="Pfam" id="PF00091">
    <property type="entry name" value="Tubulin"/>
    <property type="match status" value="1"/>
</dbReference>
<dbReference type="Pfam" id="PF03953">
    <property type="entry name" value="Tubulin_C"/>
    <property type="match status" value="1"/>
</dbReference>
<dbReference type="PRINTS" id="PR01163">
    <property type="entry name" value="BETATUBULIN"/>
</dbReference>
<dbReference type="PRINTS" id="PR01161">
    <property type="entry name" value="TUBULIN"/>
</dbReference>
<dbReference type="SMART" id="SM00864">
    <property type="entry name" value="Tubulin"/>
    <property type="match status" value="1"/>
</dbReference>
<dbReference type="SMART" id="SM00865">
    <property type="entry name" value="Tubulin_C"/>
    <property type="match status" value="1"/>
</dbReference>
<dbReference type="SUPFAM" id="SSF55307">
    <property type="entry name" value="Tubulin C-terminal domain-like"/>
    <property type="match status" value="1"/>
</dbReference>
<dbReference type="SUPFAM" id="SSF52490">
    <property type="entry name" value="Tubulin nucleotide-binding domain-like"/>
    <property type="match status" value="1"/>
</dbReference>
<dbReference type="PROSITE" id="PS00227">
    <property type="entry name" value="TUBULIN"/>
    <property type="match status" value="1"/>
</dbReference>
<dbReference type="PROSITE" id="PS00228">
    <property type="entry name" value="TUBULIN_B_AUTOREG"/>
    <property type="match status" value="1"/>
</dbReference>
<name>TBB_STYLE</name>
<evidence type="ECO:0000250" key="1">
    <source>
        <dbReference type="UniProtKB" id="P68363"/>
    </source>
</evidence>
<evidence type="ECO:0000250" key="2">
    <source>
        <dbReference type="UniProtKB" id="Q13509"/>
    </source>
</evidence>
<evidence type="ECO:0000256" key="3">
    <source>
        <dbReference type="SAM" id="MobiDB-lite"/>
    </source>
</evidence>
<evidence type="ECO:0000305" key="4"/>
<feature type="chain" id="PRO_0000048314" description="Tubulin beta chain">
    <location>
        <begin position="1"/>
        <end position="442"/>
    </location>
</feature>
<feature type="region of interest" description="Disordered" evidence="3">
    <location>
        <begin position="421"/>
        <end position="442"/>
    </location>
</feature>
<feature type="compositionally biased region" description="Acidic residues" evidence="3">
    <location>
        <begin position="429"/>
        <end position="442"/>
    </location>
</feature>
<feature type="binding site" evidence="2">
    <location>
        <position position="11"/>
    </location>
    <ligand>
        <name>GTP</name>
        <dbReference type="ChEBI" id="CHEBI:37565"/>
    </ligand>
</feature>
<feature type="binding site" evidence="1">
    <location>
        <position position="69"/>
    </location>
    <ligand>
        <name>GTP</name>
        <dbReference type="ChEBI" id="CHEBI:37565"/>
    </ligand>
</feature>
<feature type="binding site" evidence="1">
    <location>
        <position position="69"/>
    </location>
    <ligand>
        <name>Mg(2+)</name>
        <dbReference type="ChEBI" id="CHEBI:18420"/>
    </ligand>
</feature>
<feature type="binding site" evidence="2">
    <location>
        <position position="138"/>
    </location>
    <ligand>
        <name>GTP</name>
        <dbReference type="ChEBI" id="CHEBI:37565"/>
    </ligand>
</feature>
<feature type="binding site" evidence="2">
    <location>
        <position position="142"/>
    </location>
    <ligand>
        <name>GTP</name>
        <dbReference type="ChEBI" id="CHEBI:37565"/>
    </ligand>
</feature>
<feature type="binding site" evidence="2">
    <location>
        <position position="143"/>
    </location>
    <ligand>
        <name>GTP</name>
        <dbReference type="ChEBI" id="CHEBI:37565"/>
    </ligand>
</feature>
<feature type="binding site" evidence="2">
    <location>
        <position position="144"/>
    </location>
    <ligand>
        <name>GTP</name>
        <dbReference type="ChEBI" id="CHEBI:37565"/>
    </ligand>
</feature>
<feature type="binding site" evidence="2">
    <location>
        <position position="204"/>
    </location>
    <ligand>
        <name>GTP</name>
        <dbReference type="ChEBI" id="CHEBI:37565"/>
    </ligand>
</feature>
<feature type="binding site" evidence="2">
    <location>
        <position position="226"/>
    </location>
    <ligand>
        <name>GTP</name>
        <dbReference type="ChEBI" id="CHEBI:37565"/>
    </ligand>
</feature>
<accession>P11857</accession>
<organism>
    <name type="scientific">Stylonychia lemnae</name>
    <name type="common">Ciliate</name>
    <dbReference type="NCBI Taxonomy" id="5949"/>
    <lineage>
        <taxon>Eukaryota</taxon>
        <taxon>Sar</taxon>
        <taxon>Alveolata</taxon>
        <taxon>Ciliophora</taxon>
        <taxon>Intramacronucleata</taxon>
        <taxon>Spirotrichea</taxon>
        <taxon>Stichotrichia</taxon>
        <taxon>Sporadotrichida</taxon>
        <taxon>Oxytrichidae</taxon>
        <taxon>Stylonychinae</taxon>
        <taxon>Stylonychia</taxon>
    </lineage>
</organism>
<comment type="function">
    <text>Tubulin is the major constituent of microtubules, a cylinder consisting of laterally associated linear protofilaments composed of alpha- and beta-tubulin heterodimers. Microtubules grow by the addition of GTP-tubulin dimers to the microtubule end, where a stabilizing cap forms. Below the cap, tubulin dimers are in GDP-bound state, owing to GTPase activity of alpha-tubulin.</text>
</comment>
<comment type="cofactor">
    <cofactor evidence="1">
        <name>Mg(2+)</name>
        <dbReference type="ChEBI" id="CHEBI:18420"/>
    </cofactor>
</comment>
<comment type="subunit">
    <text>Dimer of alpha and beta chains. A typical microtubule is a hollow water-filled tube with an outer diameter of 25 nm and an inner diameter of 15 nM. Alpha-beta heterodimers associate head-to-tail to form protofilaments running lengthwise along the microtubule wall with the beta-tubulin subunit facing the microtubule plus end conferring a structural polarity. Microtubules usually have 13 protofilaments but different protofilament numbers can be found in some organisms and specialized cells.</text>
</comment>
<comment type="subcellular location">
    <subcellularLocation>
        <location>Cytoplasm</location>
        <location>Cytoskeleton</location>
    </subcellularLocation>
</comment>
<comment type="miscellaneous">
    <text>The sequences of the two genes coding for beta-tubulin are identical.</text>
</comment>
<comment type="similarity">
    <text evidence="4">Belongs to the tubulin family.</text>
</comment>